<sequence length="220" mass="22960">MKLNKYIDHTLLKQDAKKKQIDSLLSEAREYGFASVCVNPTWVEHAKKGLEGTDVKVCTVVGFPLGATTSAVKAFETKEAIQNGADEIDMVINVGALKSGNLALVESDIRAVVEASGDKLVKVIIEACLLTDQEKIVVCQLAQKAGADFVKTSTGFSTGGATIADVTLMRETVGSDMGVKAAGGARSYADALAFVEAGATRIGTSAGVAILKGELADGDY</sequence>
<protein>
    <recommendedName>
        <fullName evidence="1">Deoxyribose-phosphate aldolase</fullName>
        <shortName evidence="1">DERA</shortName>
        <ecNumber evidence="1">4.1.2.4</ecNumber>
    </recommendedName>
    <alternativeName>
        <fullName evidence="1">2-deoxy-D-ribose 5-phosphate aldolase</fullName>
    </alternativeName>
    <alternativeName>
        <fullName evidence="1">Phosphodeoxyriboaldolase</fullName>
        <shortName evidence="1">Deoxyriboaldolase</shortName>
    </alternativeName>
</protein>
<feature type="chain" id="PRO_1000015330" description="Deoxyribose-phosphate aldolase">
    <location>
        <begin position="1"/>
        <end position="220"/>
    </location>
</feature>
<feature type="active site" description="Proton donor/acceptor" evidence="1">
    <location>
        <position position="89"/>
    </location>
</feature>
<feature type="active site" description="Schiff-base intermediate with acetaldehyde" evidence="1">
    <location>
        <position position="151"/>
    </location>
</feature>
<feature type="active site" description="Proton donor/acceptor" evidence="1">
    <location>
        <position position="180"/>
    </location>
</feature>
<organism>
    <name type="scientific">Streptococcus pneumoniae serotype 2 (strain D39 / NCTC 7466)</name>
    <dbReference type="NCBI Taxonomy" id="373153"/>
    <lineage>
        <taxon>Bacteria</taxon>
        <taxon>Bacillati</taxon>
        <taxon>Bacillota</taxon>
        <taxon>Bacilli</taxon>
        <taxon>Lactobacillales</taxon>
        <taxon>Streptococcaceae</taxon>
        <taxon>Streptococcus</taxon>
    </lineage>
</organism>
<keyword id="KW-0963">Cytoplasm</keyword>
<keyword id="KW-0456">Lyase</keyword>
<keyword id="KW-1185">Reference proteome</keyword>
<keyword id="KW-0704">Schiff base</keyword>
<name>DEOC_STRP2</name>
<dbReference type="EC" id="4.1.2.4" evidence="1"/>
<dbReference type="EMBL" id="CP000410">
    <property type="protein sequence ID" value="ABJ55453.1"/>
    <property type="molecule type" value="Genomic_DNA"/>
</dbReference>
<dbReference type="RefSeq" id="WP_000773685.1">
    <property type="nucleotide sequence ID" value="NZ_JAMLJR010000018.1"/>
</dbReference>
<dbReference type="SMR" id="Q04L69"/>
<dbReference type="PaxDb" id="373153-SPD_0737"/>
<dbReference type="KEGG" id="spd:SPD_0737"/>
<dbReference type="eggNOG" id="COG0274">
    <property type="taxonomic scope" value="Bacteria"/>
</dbReference>
<dbReference type="HOGENOM" id="CLU_053595_0_0_9"/>
<dbReference type="BioCyc" id="SPNE373153:G1G6V-810-MONOMER"/>
<dbReference type="UniPathway" id="UPA00002">
    <property type="reaction ID" value="UER00468"/>
</dbReference>
<dbReference type="Proteomes" id="UP000001452">
    <property type="component" value="Chromosome"/>
</dbReference>
<dbReference type="GO" id="GO:0005737">
    <property type="term" value="C:cytoplasm"/>
    <property type="evidence" value="ECO:0007669"/>
    <property type="project" value="UniProtKB-SubCell"/>
</dbReference>
<dbReference type="GO" id="GO:0004139">
    <property type="term" value="F:deoxyribose-phosphate aldolase activity"/>
    <property type="evidence" value="ECO:0007669"/>
    <property type="project" value="UniProtKB-UniRule"/>
</dbReference>
<dbReference type="GO" id="GO:0006018">
    <property type="term" value="P:2-deoxyribose 1-phosphate catabolic process"/>
    <property type="evidence" value="ECO:0007669"/>
    <property type="project" value="UniProtKB-UniRule"/>
</dbReference>
<dbReference type="GO" id="GO:0016052">
    <property type="term" value="P:carbohydrate catabolic process"/>
    <property type="evidence" value="ECO:0007669"/>
    <property type="project" value="TreeGrafter"/>
</dbReference>
<dbReference type="GO" id="GO:0009264">
    <property type="term" value="P:deoxyribonucleotide catabolic process"/>
    <property type="evidence" value="ECO:0007669"/>
    <property type="project" value="InterPro"/>
</dbReference>
<dbReference type="CDD" id="cd00959">
    <property type="entry name" value="DeoC"/>
    <property type="match status" value="1"/>
</dbReference>
<dbReference type="FunFam" id="3.20.20.70:FF:000044">
    <property type="entry name" value="Deoxyribose-phosphate aldolase"/>
    <property type="match status" value="1"/>
</dbReference>
<dbReference type="Gene3D" id="3.20.20.70">
    <property type="entry name" value="Aldolase class I"/>
    <property type="match status" value="1"/>
</dbReference>
<dbReference type="HAMAP" id="MF_00114">
    <property type="entry name" value="DeoC_type1"/>
    <property type="match status" value="1"/>
</dbReference>
<dbReference type="InterPro" id="IPR013785">
    <property type="entry name" value="Aldolase_TIM"/>
</dbReference>
<dbReference type="InterPro" id="IPR011343">
    <property type="entry name" value="DeoC"/>
</dbReference>
<dbReference type="InterPro" id="IPR002915">
    <property type="entry name" value="DeoC/FbaB/LacD_aldolase"/>
</dbReference>
<dbReference type="InterPro" id="IPR028581">
    <property type="entry name" value="DeoC_typeI"/>
</dbReference>
<dbReference type="NCBIfam" id="TIGR00126">
    <property type="entry name" value="deoC"/>
    <property type="match status" value="1"/>
</dbReference>
<dbReference type="PANTHER" id="PTHR10889">
    <property type="entry name" value="DEOXYRIBOSE-PHOSPHATE ALDOLASE"/>
    <property type="match status" value="1"/>
</dbReference>
<dbReference type="PANTHER" id="PTHR10889:SF1">
    <property type="entry name" value="DEOXYRIBOSE-PHOSPHATE ALDOLASE"/>
    <property type="match status" value="1"/>
</dbReference>
<dbReference type="Pfam" id="PF01791">
    <property type="entry name" value="DeoC"/>
    <property type="match status" value="1"/>
</dbReference>
<dbReference type="PIRSF" id="PIRSF001357">
    <property type="entry name" value="DeoC"/>
    <property type="match status" value="1"/>
</dbReference>
<dbReference type="SMART" id="SM01133">
    <property type="entry name" value="DeoC"/>
    <property type="match status" value="1"/>
</dbReference>
<dbReference type="SUPFAM" id="SSF51569">
    <property type="entry name" value="Aldolase"/>
    <property type="match status" value="1"/>
</dbReference>
<reference key="1">
    <citation type="journal article" date="2007" name="J. Bacteriol.">
        <title>Genome sequence of Avery's virulent serotype 2 strain D39 of Streptococcus pneumoniae and comparison with that of unencapsulated laboratory strain R6.</title>
        <authorList>
            <person name="Lanie J.A."/>
            <person name="Ng W.-L."/>
            <person name="Kazmierczak K.M."/>
            <person name="Andrzejewski T.M."/>
            <person name="Davidsen T.M."/>
            <person name="Wayne K.J."/>
            <person name="Tettelin H."/>
            <person name="Glass J.I."/>
            <person name="Winkler M.E."/>
        </authorList>
    </citation>
    <scope>NUCLEOTIDE SEQUENCE [LARGE SCALE GENOMIC DNA]</scope>
    <source>
        <strain>D39 / NCTC 7466</strain>
    </source>
</reference>
<accession>Q04L69</accession>
<comment type="function">
    <text evidence="1">Catalyzes a reversible aldol reaction between acetaldehyde and D-glyceraldehyde 3-phosphate to generate 2-deoxy-D-ribose 5-phosphate.</text>
</comment>
<comment type="catalytic activity">
    <reaction evidence="1">
        <text>2-deoxy-D-ribose 5-phosphate = D-glyceraldehyde 3-phosphate + acetaldehyde</text>
        <dbReference type="Rhea" id="RHEA:12821"/>
        <dbReference type="ChEBI" id="CHEBI:15343"/>
        <dbReference type="ChEBI" id="CHEBI:59776"/>
        <dbReference type="ChEBI" id="CHEBI:62877"/>
        <dbReference type="EC" id="4.1.2.4"/>
    </reaction>
</comment>
<comment type="pathway">
    <text evidence="1">Carbohydrate degradation; 2-deoxy-D-ribose 1-phosphate degradation; D-glyceraldehyde 3-phosphate and acetaldehyde from 2-deoxy-alpha-D-ribose 1-phosphate: step 2/2.</text>
</comment>
<comment type="subcellular location">
    <subcellularLocation>
        <location evidence="1">Cytoplasm</location>
    </subcellularLocation>
</comment>
<comment type="similarity">
    <text evidence="1">Belongs to the DeoC/FbaB aldolase family. DeoC type 1 subfamily.</text>
</comment>
<proteinExistence type="inferred from homology"/>
<gene>
    <name evidence="1" type="primary">deoC</name>
    <name type="ordered locus">SPD_0737</name>
</gene>
<evidence type="ECO:0000255" key="1">
    <source>
        <dbReference type="HAMAP-Rule" id="MF_00114"/>
    </source>
</evidence>